<gene>
    <name evidence="1" type="primary">rplK</name>
    <name type="synonym">relC</name>
</gene>
<sequence>MPPKKKKVTGLIKLQINAGAANPAPPVGPALGQHGVNIMEFCKAYNAATESQRGMVVPVEITVYEDRSFTFVTKTPPAAKLILKAAGVDKGSGEPHKTKVAKLTAAQVREIATTKLPDLNANDLDAASKIIAGTARSMGITVEG</sequence>
<proteinExistence type="inferred from homology"/>
<feature type="chain" id="PRO_0000104380" description="Large ribosomal subunit protein uL11">
    <location>
        <begin position="1"/>
        <end position="144"/>
    </location>
</feature>
<feature type="sequence variant" description="In thiopeptin resistance.">
    <location>
        <begin position="28"/>
        <end position="31"/>
    </location>
</feature>
<dbReference type="EMBL" id="X72787">
    <property type="protein sequence ID" value="CAA51297.1"/>
    <property type="molecule type" value="Genomic_DNA"/>
</dbReference>
<dbReference type="EMBL" id="D87846">
    <property type="protein sequence ID" value="BAA22444.1"/>
    <property type="molecule type" value="Genomic_DNA"/>
</dbReference>
<dbReference type="EMBL" id="D87846">
    <property type="protein sequence ID" value="BAA22445.1"/>
    <property type="molecule type" value="Genomic_DNA"/>
</dbReference>
<dbReference type="PIR" id="S32235">
    <property type="entry name" value="S32235"/>
</dbReference>
<dbReference type="RefSeq" id="WP_003967000.1">
    <property type="nucleotide sequence ID" value="NZ_UAVD01000027.1"/>
</dbReference>
<dbReference type="SMR" id="P36258"/>
<dbReference type="STRING" id="1911.GCA_001715295_02336"/>
<dbReference type="OMA" id="CKQFNAK"/>
<dbReference type="OrthoDB" id="9802408at2"/>
<dbReference type="GO" id="GO:0022625">
    <property type="term" value="C:cytosolic large ribosomal subunit"/>
    <property type="evidence" value="ECO:0007669"/>
    <property type="project" value="TreeGrafter"/>
</dbReference>
<dbReference type="GO" id="GO:0070180">
    <property type="term" value="F:large ribosomal subunit rRNA binding"/>
    <property type="evidence" value="ECO:0007669"/>
    <property type="project" value="UniProtKB-UniRule"/>
</dbReference>
<dbReference type="GO" id="GO:0003735">
    <property type="term" value="F:structural constituent of ribosome"/>
    <property type="evidence" value="ECO:0007669"/>
    <property type="project" value="InterPro"/>
</dbReference>
<dbReference type="GO" id="GO:0046677">
    <property type="term" value="P:response to antibiotic"/>
    <property type="evidence" value="ECO:0007669"/>
    <property type="project" value="UniProtKB-KW"/>
</dbReference>
<dbReference type="GO" id="GO:0006412">
    <property type="term" value="P:translation"/>
    <property type="evidence" value="ECO:0007669"/>
    <property type="project" value="UniProtKB-UniRule"/>
</dbReference>
<dbReference type="CDD" id="cd00349">
    <property type="entry name" value="Ribosomal_L11"/>
    <property type="match status" value="1"/>
</dbReference>
<dbReference type="FunFam" id="1.10.10.250:FF:000001">
    <property type="entry name" value="50S ribosomal protein L11"/>
    <property type="match status" value="1"/>
</dbReference>
<dbReference type="FunFam" id="3.30.1550.10:FF:000001">
    <property type="entry name" value="50S ribosomal protein L11"/>
    <property type="match status" value="1"/>
</dbReference>
<dbReference type="Gene3D" id="1.10.10.250">
    <property type="entry name" value="Ribosomal protein L11, C-terminal domain"/>
    <property type="match status" value="1"/>
</dbReference>
<dbReference type="Gene3D" id="3.30.1550.10">
    <property type="entry name" value="Ribosomal protein L11/L12, N-terminal domain"/>
    <property type="match status" value="1"/>
</dbReference>
<dbReference type="HAMAP" id="MF_00736">
    <property type="entry name" value="Ribosomal_uL11"/>
    <property type="match status" value="1"/>
</dbReference>
<dbReference type="InterPro" id="IPR000911">
    <property type="entry name" value="Ribosomal_uL11"/>
</dbReference>
<dbReference type="InterPro" id="IPR006519">
    <property type="entry name" value="Ribosomal_uL11_bac-typ"/>
</dbReference>
<dbReference type="InterPro" id="IPR020783">
    <property type="entry name" value="Ribosomal_uL11_C"/>
</dbReference>
<dbReference type="InterPro" id="IPR036769">
    <property type="entry name" value="Ribosomal_uL11_C_sf"/>
</dbReference>
<dbReference type="InterPro" id="IPR020785">
    <property type="entry name" value="Ribosomal_uL11_CS"/>
</dbReference>
<dbReference type="InterPro" id="IPR020784">
    <property type="entry name" value="Ribosomal_uL11_N"/>
</dbReference>
<dbReference type="InterPro" id="IPR036796">
    <property type="entry name" value="Ribosomal_uL11_N_sf"/>
</dbReference>
<dbReference type="NCBIfam" id="TIGR01632">
    <property type="entry name" value="L11_bact"/>
    <property type="match status" value="1"/>
</dbReference>
<dbReference type="PANTHER" id="PTHR11661">
    <property type="entry name" value="60S RIBOSOMAL PROTEIN L12"/>
    <property type="match status" value="1"/>
</dbReference>
<dbReference type="PANTHER" id="PTHR11661:SF1">
    <property type="entry name" value="LARGE RIBOSOMAL SUBUNIT PROTEIN UL11M"/>
    <property type="match status" value="1"/>
</dbReference>
<dbReference type="Pfam" id="PF00298">
    <property type="entry name" value="Ribosomal_L11"/>
    <property type="match status" value="1"/>
</dbReference>
<dbReference type="Pfam" id="PF03946">
    <property type="entry name" value="Ribosomal_L11_N"/>
    <property type="match status" value="1"/>
</dbReference>
<dbReference type="SMART" id="SM00649">
    <property type="entry name" value="RL11"/>
    <property type="match status" value="1"/>
</dbReference>
<dbReference type="SUPFAM" id="SSF54747">
    <property type="entry name" value="Ribosomal L11/L12e N-terminal domain"/>
    <property type="match status" value="1"/>
</dbReference>
<dbReference type="SUPFAM" id="SSF46906">
    <property type="entry name" value="Ribosomal protein L11, C-terminal domain"/>
    <property type="match status" value="1"/>
</dbReference>
<dbReference type="PROSITE" id="PS00359">
    <property type="entry name" value="RIBOSOMAL_L11"/>
    <property type="match status" value="1"/>
</dbReference>
<organism>
    <name type="scientific">Streptomyces griseus</name>
    <dbReference type="NCBI Taxonomy" id="1911"/>
    <lineage>
        <taxon>Bacteria</taxon>
        <taxon>Bacillati</taxon>
        <taxon>Actinomycetota</taxon>
        <taxon>Actinomycetes</taxon>
        <taxon>Kitasatosporales</taxon>
        <taxon>Streptomycetaceae</taxon>
        <taxon>Streptomyces</taxon>
    </lineage>
</organism>
<accession>P36258</accession>
<accession>O32448</accession>
<evidence type="ECO:0000255" key="1">
    <source>
        <dbReference type="HAMAP-Rule" id="MF_00736"/>
    </source>
</evidence>
<evidence type="ECO:0000305" key="2"/>
<keyword id="KW-0046">Antibiotic resistance</keyword>
<keyword id="KW-0488">Methylation</keyword>
<keyword id="KW-0687">Ribonucleoprotein</keyword>
<keyword id="KW-0689">Ribosomal protein</keyword>
<keyword id="KW-0694">RNA-binding</keyword>
<keyword id="KW-0699">rRNA-binding</keyword>
<protein>
    <recommendedName>
        <fullName evidence="1">Large ribosomal subunit protein uL11</fullName>
    </recommendedName>
    <alternativeName>
        <fullName evidence="2">50S ribosomal protein L11</fullName>
    </alternativeName>
</protein>
<comment type="function">
    <text evidence="1">Forms part of the ribosomal stalk which helps the ribosome interact with GTP-bound translation factors.</text>
</comment>
<comment type="subunit">
    <text evidence="1">Part of the ribosomal stalk of the 50S ribosomal subunit. Interacts with L10 and the large rRNA to form the base of the stalk. L10 forms an elongated spine to which L12 dimers bind in a sequential fashion forming a multimeric L10(L12)X complex.</text>
</comment>
<comment type="PTM">
    <text evidence="1">One or more lysine residues are methylated.</text>
</comment>
<comment type="similarity">
    <text evidence="1">Belongs to the universal ribosomal protein uL11 family.</text>
</comment>
<reference key="1">
    <citation type="journal article" date="1994" name="FEMS Microbiol. Lett.">
        <title>The nusG gene of Streptomyces griseus: cloning of the gene and analysis of the A-factor binding properties of the gene product.</title>
        <authorList>
            <person name="Kuberski S."/>
            <person name="Kasberg T."/>
            <person name="Distler J."/>
        </authorList>
    </citation>
    <scope>NUCLEOTIDE SEQUENCE [GENOMIC DNA]</scope>
    <source>
        <strain>N2-3-11</strain>
    </source>
</reference>
<reference key="2">
    <citation type="journal article" date="1997" name="Mol. Gen. Genet.">
        <title>Molecular analysis of the ribosomal L11 protein gene (rplK = relC) of Streptomyces griseus and identification of a deletion allele.</title>
        <authorList>
            <person name="Kawamoto S."/>
            <person name="Zhang D."/>
            <person name="Ochi K."/>
        </authorList>
    </citation>
    <scope>NUCLEOTIDE SEQUENCE [GENOMIC DNA]</scope>
    <source>
        <strain>ATCC 11984 / NBRC 13189 / SL-842</strain>
    </source>
</reference>
<name>RL11_STRGR</name>